<keyword id="KW-0131">Cell cycle</keyword>
<keyword id="KW-0132">Cell division</keyword>
<keyword id="KW-0997">Cell inner membrane</keyword>
<keyword id="KW-1003">Cell membrane</keyword>
<keyword id="KW-0133">Cell shape</keyword>
<keyword id="KW-0961">Cell wall biogenesis/degradation</keyword>
<keyword id="KW-0328">Glycosyltransferase</keyword>
<keyword id="KW-0472">Membrane</keyword>
<keyword id="KW-0573">Peptidoglycan synthesis</keyword>
<keyword id="KW-1185">Reference proteome</keyword>
<keyword id="KW-0808">Transferase</keyword>
<evidence type="ECO:0000255" key="1">
    <source>
        <dbReference type="HAMAP-Rule" id="MF_00033"/>
    </source>
</evidence>
<evidence type="ECO:0000305" key="2"/>
<organism>
    <name type="scientific">Photobacterium profundum (strain SS9)</name>
    <dbReference type="NCBI Taxonomy" id="298386"/>
    <lineage>
        <taxon>Bacteria</taxon>
        <taxon>Pseudomonadati</taxon>
        <taxon>Pseudomonadota</taxon>
        <taxon>Gammaproteobacteria</taxon>
        <taxon>Vibrionales</taxon>
        <taxon>Vibrionaceae</taxon>
        <taxon>Photobacterium</taxon>
    </lineage>
</organism>
<name>MURG_PHOPR</name>
<gene>
    <name evidence="1" type="primary">murG</name>
    <name type="ordered locus">PBPRA3215</name>
</gene>
<protein>
    <recommendedName>
        <fullName evidence="1">UDP-N-acetylglucosamine--N-acetylmuramyl-(pentapeptide) pyrophosphoryl-undecaprenol N-acetylglucosamine transferase</fullName>
        <ecNumber evidence="1">2.4.1.227</ecNumber>
    </recommendedName>
    <alternativeName>
        <fullName evidence="1">Undecaprenyl-PP-MurNAc-pentapeptide-UDPGlcNAc GlcNAc transferase</fullName>
    </alternativeName>
</protein>
<reference key="1">
    <citation type="journal article" date="2005" name="Science">
        <title>Life at depth: Photobacterium profundum genome sequence and expression analysis.</title>
        <authorList>
            <person name="Vezzi A."/>
            <person name="Campanaro S."/>
            <person name="D'Angelo M."/>
            <person name="Simonato F."/>
            <person name="Vitulo N."/>
            <person name="Lauro F.M."/>
            <person name="Cestaro A."/>
            <person name="Malacrida G."/>
            <person name="Simionati B."/>
            <person name="Cannata N."/>
            <person name="Romualdi C."/>
            <person name="Bartlett D.H."/>
            <person name="Valle G."/>
        </authorList>
    </citation>
    <scope>NUCLEOTIDE SEQUENCE [LARGE SCALE GENOMIC DNA]</scope>
    <source>
        <strain>ATCC BAA-1253 / SS9</strain>
    </source>
</reference>
<comment type="function">
    <text evidence="1">Cell wall formation. Catalyzes the transfer of a GlcNAc subunit on undecaprenyl-pyrophosphoryl-MurNAc-pentapeptide (lipid intermediate I) to form undecaprenyl-pyrophosphoryl-MurNAc-(pentapeptide)GlcNAc (lipid intermediate II).</text>
</comment>
<comment type="catalytic activity">
    <reaction evidence="1">
        <text>di-trans,octa-cis-undecaprenyl diphospho-N-acetyl-alpha-D-muramoyl-L-alanyl-D-glutamyl-meso-2,6-diaminopimeloyl-D-alanyl-D-alanine + UDP-N-acetyl-alpha-D-glucosamine = di-trans,octa-cis-undecaprenyl diphospho-[N-acetyl-alpha-D-glucosaminyl-(1-&gt;4)]-N-acetyl-alpha-D-muramoyl-L-alanyl-D-glutamyl-meso-2,6-diaminopimeloyl-D-alanyl-D-alanine + UDP + H(+)</text>
        <dbReference type="Rhea" id="RHEA:31227"/>
        <dbReference type="ChEBI" id="CHEBI:15378"/>
        <dbReference type="ChEBI" id="CHEBI:57705"/>
        <dbReference type="ChEBI" id="CHEBI:58223"/>
        <dbReference type="ChEBI" id="CHEBI:61387"/>
        <dbReference type="ChEBI" id="CHEBI:61388"/>
        <dbReference type="EC" id="2.4.1.227"/>
    </reaction>
</comment>
<comment type="pathway">
    <text evidence="1">Cell wall biogenesis; peptidoglycan biosynthesis.</text>
</comment>
<comment type="subcellular location">
    <subcellularLocation>
        <location evidence="1">Cell inner membrane</location>
        <topology evidence="1">Peripheral membrane protein</topology>
        <orientation evidence="1">Cytoplasmic side</orientation>
    </subcellularLocation>
</comment>
<comment type="similarity">
    <text evidence="1">Belongs to the glycosyltransferase 28 family. MurG subfamily.</text>
</comment>
<comment type="sequence caution" evidence="2">
    <conflict type="erroneous initiation">
        <sequence resource="EMBL-CDS" id="CAG21521"/>
    </conflict>
</comment>
<accession>Q6LMF6</accession>
<sequence>MNKNKRLLVMAGGTGGHVFPGLAVAKKLQQEGWEIRWLGTADRMEADLVPKHGIEIDFIKVKGLRGQGIIRMLAAPFKIVGAILQARKYIKAWQPDVVLGMGGYVSGPGGIAAWLSGVPVVLHEQNAVAGLTNQWLSRIAAKVLQAFPGAFANKDVVGNPVRQDVTALASPQERFAGRQGPVRILVMGGSQGARILNQTLPEVAGLLGDKVTIWHQAGKGSLQVTEQAYAKSTNVPHKVTEFIDDVAAAYAWADVVVCRSGALTVSELSAAGVGAIFVPFMHKDRQQALNADHLVQCGAAKMIEQMDLTAAGLAEELNQLDREVLKQMAVAAREAAIVDADVRVADVIKSLARK</sequence>
<feature type="chain" id="PRO_0000225075" description="UDP-N-acetylglucosamine--N-acetylmuramyl-(pentapeptide) pyrophosphoryl-undecaprenol N-acetylglucosamine transferase">
    <location>
        <begin position="1"/>
        <end position="354"/>
    </location>
</feature>
<feature type="binding site" evidence="1">
    <location>
        <begin position="14"/>
        <end position="16"/>
    </location>
    <ligand>
        <name>UDP-N-acetyl-alpha-D-glucosamine</name>
        <dbReference type="ChEBI" id="CHEBI:57705"/>
    </ligand>
</feature>
<feature type="binding site" evidence="1">
    <location>
        <position position="126"/>
    </location>
    <ligand>
        <name>UDP-N-acetyl-alpha-D-glucosamine</name>
        <dbReference type="ChEBI" id="CHEBI:57705"/>
    </ligand>
</feature>
<feature type="binding site" evidence="1">
    <location>
        <position position="162"/>
    </location>
    <ligand>
        <name>UDP-N-acetyl-alpha-D-glucosamine</name>
        <dbReference type="ChEBI" id="CHEBI:57705"/>
    </ligand>
</feature>
<feature type="binding site" evidence="1">
    <location>
        <position position="190"/>
    </location>
    <ligand>
        <name>UDP-N-acetyl-alpha-D-glucosamine</name>
        <dbReference type="ChEBI" id="CHEBI:57705"/>
    </ligand>
</feature>
<feature type="binding site" evidence="1">
    <location>
        <position position="243"/>
    </location>
    <ligand>
        <name>UDP-N-acetyl-alpha-D-glucosamine</name>
        <dbReference type="ChEBI" id="CHEBI:57705"/>
    </ligand>
</feature>
<feature type="binding site" evidence="1">
    <location>
        <begin position="262"/>
        <end position="267"/>
    </location>
    <ligand>
        <name>UDP-N-acetyl-alpha-D-glucosamine</name>
        <dbReference type="ChEBI" id="CHEBI:57705"/>
    </ligand>
</feature>
<feature type="binding site" evidence="1">
    <location>
        <position position="287"/>
    </location>
    <ligand>
        <name>UDP-N-acetyl-alpha-D-glucosamine</name>
        <dbReference type="ChEBI" id="CHEBI:57705"/>
    </ligand>
</feature>
<proteinExistence type="inferred from homology"/>
<dbReference type="EC" id="2.4.1.227" evidence="1"/>
<dbReference type="EMBL" id="CR378673">
    <property type="protein sequence ID" value="CAG21521.1"/>
    <property type="status" value="ALT_INIT"/>
    <property type="molecule type" value="Genomic_DNA"/>
</dbReference>
<dbReference type="RefSeq" id="WP_041394825.1">
    <property type="nucleotide sequence ID" value="NC_006370.1"/>
</dbReference>
<dbReference type="SMR" id="Q6LMF6"/>
<dbReference type="STRING" id="298386.PBPRA3215"/>
<dbReference type="CAZy" id="GT28">
    <property type="family name" value="Glycosyltransferase Family 28"/>
</dbReference>
<dbReference type="KEGG" id="ppr:PBPRA3215"/>
<dbReference type="eggNOG" id="COG0707">
    <property type="taxonomic scope" value="Bacteria"/>
</dbReference>
<dbReference type="HOGENOM" id="CLU_037404_2_0_6"/>
<dbReference type="UniPathway" id="UPA00219"/>
<dbReference type="Proteomes" id="UP000000593">
    <property type="component" value="Chromosome 1"/>
</dbReference>
<dbReference type="GO" id="GO:0005886">
    <property type="term" value="C:plasma membrane"/>
    <property type="evidence" value="ECO:0007669"/>
    <property type="project" value="UniProtKB-SubCell"/>
</dbReference>
<dbReference type="GO" id="GO:0051991">
    <property type="term" value="F:UDP-N-acetyl-D-glucosamine:N-acetylmuramoyl-L-alanyl-D-glutamyl-meso-2,6-diaminopimelyl-D-alanyl-D-alanine-diphosphoundecaprenol 4-beta-N-acetylglucosaminlytransferase activity"/>
    <property type="evidence" value="ECO:0007669"/>
    <property type="project" value="RHEA"/>
</dbReference>
<dbReference type="GO" id="GO:0050511">
    <property type="term" value="F:undecaprenyldiphospho-muramoylpentapeptide beta-N-acetylglucosaminyltransferase activity"/>
    <property type="evidence" value="ECO:0007669"/>
    <property type="project" value="UniProtKB-UniRule"/>
</dbReference>
<dbReference type="GO" id="GO:0005975">
    <property type="term" value="P:carbohydrate metabolic process"/>
    <property type="evidence" value="ECO:0007669"/>
    <property type="project" value="InterPro"/>
</dbReference>
<dbReference type="GO" id="GO:0051301">
    <property type="term" value="P:cell division"/>
    <property type="evidence" value="ECO:0007669"/>
    <property type="project" value="UniProtKB-KW"/>
</dbReference>
<dbReference type="GO" id="GO:0071555">
    <property type="term" value="P:cell wall organization"/>
    <property type="evidence" value="ECO:0007669"/>
    <property type="project" value="UniProtKB-KW"/>
</dbReference>
<dbReference type="GO" id="GO:0030259">
    <property type="term" value="P:lipid glycosylation"/>
    <property type="evidence" value="ECO:0007669"/>
    <property type="project" value="UniProtKB-UniRule"/>
</dbReference>
<dbReference type="GO" id="GO:0009252">
    <property type="term" value="P:peptidoglycan biosynthetic process"/>
    <property type="evidence" value="ECO:0007669"/>
    <property type="project" value="UniProtKB-UniRule"/>
</dbReference>
<dbReference type="GO" id="GO:0008360">
    <property type="term" value="P:regulation of cell shape"/>
    <property type="evidence" value="ECO:0007669"/>
    <property type="project" value="UniProtKB-KW"/>
</dbReference>
<dbReference type="CDD" id="cd03785">
    <property type="entry name" value="GT28_MurG"/>
    <property type="match status" value="1"/>
</dbReference>
<dbReference type="Gene3D" id="3.40.50.2000">
    <property type="entry name" value="Glycogen Phosphorylase B"/>
    <property type="match status" value="2"/>
</dbReference>
<dbReference type="HAMAP" id="MF_00033">
    <property type="entry name" value="MurG"/>
    <property type="match status" value="1"/>
</dbReference>
<dbReference type="InterPro" id="IPR006009">
    <property type="entry name" value="GlcNAc_MurG"/>
</dbReference>
<dbReference type="InterPro" id="IPR007235">
    <property type="entry name" value="Glyco_trans_28_C"/>
</dbReference>
<dbReference type="InterPro" id="IPR004276">
    <property type="entry name" value="GlycoTrans_28_N"/>
</dbReference>
<dbReference type="NCBIfam" id="TIGR01133">
    <property type="entry name" value="murG"/>
    <property type="match status" value="1"/>
</dbReference>
<dbReference type="PANTHER" id="PTHR21015:SF22">
    <property type="entry name" value="GLYCOSYLTRANSFERASE"/>
    <property type="match status" value="1"/>
</dbReference>
<dbReference type="PANTHER" id="PTHR21015">
    <property type="entry name" value="UDP-N-ACETYLGLUCOSAMINE--N-ACETYLMURAMYL-(PENTAPEPTIDE) PYROPHOSPHORYL-UNDECAPRENOL N-ACETYLGLUCOSAMINE TRANSFERASE 1"/>
    <property type="match status" value="1"/>
</dbReference>
<dbReference type="Pfam" id="PF04101">
    <property type="entry name" value="Glyco_tran_28_C"/>
    <property type="match status" value="1"/>
</dbReference>
<dbReference type="Pfam" id="PF03033">
    <property type="entry name" value="Glyco_transf_28"/>
    <property type="match status" value="1"/>
</dbReference>
<dbReference type="SUPFAM" id="SSF53756">
    <property type="entry name" value="UDP-Glycosyltransferase/glycogen phosphorylase"/>
    <property type="match status" value="1"/>
</dbReference>